<proteinExistence type="inferred from homology"/>
<comment type="function">
    <text evidence="1">Functions in the N-end rule pathway of protein degradation where it conjugates Leu, Phe and, less efficiently, Met from aminoacyl-tRNAs to the N-termini of proteins containing an N-terminal arginine or lysine.</text>
</comment>
<comment type="catalytic activity">
    <reaction evidence="1">
        <text>N-terminal L-lysyl-[protein] + L-leucyl-tRNA(Leu) = N-terminal L-leucyl-L-lysyl-[protein] + tRNA(Leu) + H(+)</text>
        <dbReference type="Rhea" id="RHEA:12340"/>
        <dbReference type="Rhea" id="RHEA-COMP:9613"/>
        <dbReference type="Rhea" id="RHEA-COMP:9622"/>
        <dbReference type="Rhea" id="RHEA-COMP:12670"/>
        <dbReference type="Rhea" id="RHEA-COMP:12671"/>
        <dbReference type="ChEBI" id="CHEBI:15378"/>
        <dbReference type="ChEBI" id="CHEBI:65249"/>
        <dbReference type="ChEBI" id="CHEBI:78442"/>
        <dbReference type="ChEBI" id="CHEBI:78494"/>
        <dbReference type="ChEBI" id="CHEBI:133043"/>
        <dbReference type="EC" id="2.3.2.6"/>
    </reaction>
</comment>
<comment type="catalytic activity">
    <reaction evidence="1">
        <text>N-terminal L-arginyl-[protein] + L-leucyl-tRNA(Leu) = N-terminal L-leucyl-L-arginyl-[protein] + tRNA(Leu) + H(+)</text>
        <dbReference type="Rhea" id="RHEA:50416"/>
        <dbReference type="Rhea" id="RHEA-COMP:9613"/>
        <dbReference type="Rhea" id="RHEA-COMP:9622"/>
        <dbReference type="Rhea" id="RHEA-COMP:12672"/>
        <dbReference type="Rhea" id="RHEA-COMP:12673"/>
        <dbReference type="ChEBI" id="CHEBI:15378"/>
        <dbReference type="ChEBI" id="CHEBI:64719"/>
        <dbReference type="ChEBI" id="CHEBI:78442"/>
        <dbReference type="ChEBI" id="CHEBI:78494"/>
        <dbReference type="ChEBI" id="CHEBI:133044"/>
        <dbReference type="EC" id="2.3.2.6"/>
    </reaction>
</comment>
<comment type="catalytic activity">
    <reaction evidence="1">
        <text>L-phenylalanyl-tRNA(Phe) + an N-terminal L-alpha-aminoacyl-[protein] = an N-terminal L-phenylalanyl-L-alpha-aminoacyl-[protein] + tRNA(Phe)</text>
        <dbReference type="Rhea" id="RHEA:43632"/>
        <dbReference type="Rhea" id="RHEA-COMP:9668"/>
        <dbReference type="Rhea" id="RHEA-COMP:9699"/>
        <dbReference type="Rhea" id="RHEA-COMP:10636"/>
        <dbReference type="Rhea" id="RHEA-COMP:10637"/>
        <dbReference type="ChEBI" id="CHEBI:78442"/>
        <dbReference type="ChEBI" id="CHEBI:78531"/>
        <dbReference type="ChEBI" id="CHEBI:78597"/>
        <dbReference type="ChEBI" id="CHEBI:83561"/>
        <dbReference type="EC" id="2.3.2.6"/>
    </reaction>
</comment>
<comment type="subcellular location">
    <subcellularLocation>
        <location evidence="1">Cytoplasm</location>
    </subcellularLocation>
</comment>
<comment type="similarity">
    <text evidence="1">Belongs to the L/F-transferase family.</text>
</comment>
<protein>
    <recommendedName>
        <fullName evidence="1">Leucyl/phenylalanyl-tRNA--protein transferase</fullName>
        <ecNumber evidence="1">2.3.2.6</ecNumber>
    </recommendedName>
    <alternativeName>
        <fullName evidence="1">L/F-transferase</fullName>
    </alternativeName>
    <alternativeName>
        <fullName evidence="1">Leucyltransferase</fullName>
    </alternativeName>
    <alternativeName>
        <fullName evidence="1">Phenyalanyltransferase</fullName>
    </alternativeName>
</protein>
<accession>Q5P1A7</accession>
<gene>
    <name evidence="1" type="primary">aat</name>
    <name type="ordered locus">AZOSEA27820</name>
    <name type="ORF">ebA4891</name>
</gene>
<sequence>MIPWLAGRPDFPPVEQALEDPDGLLAAGGELSPAWLLAAYRRGIFPWYTEDQPILWWSPDPRLVLIPAHLRISRSLRRTLRQQRFEVRFDTAFADVIAACAEPREPGGGTWISPEIRQAYLRLHELGYAHSVESWVDGTLVGGLYGIALGRAFFGESMFSRRSDASKVALVHLAAHLQRLGFAAIDCQMTTAHLLSLGAEEMPRARFCAGLANWTNEGPGPGRWSCEKAAEISRNFS</sequence>
<reference key="1">
    <citation type="journal article" date="2005" name="Arch. Microbiol.">
        <title>The genome sequence of an anaerobic aromatic-degrading denitrifying bacterium, strain EbN1.</title>
        <authorList>
            <person name="Rabus R."/>
            <person name="Kube M."/>
            <person name="Heider J."/>
            <person name="Beck A."/>
            <person name="Heitmann K."/>
            <person name="Widdel F."/>
            <person name="Reinhardt R."/>
        </authorList>
    </citation>
    <scope>NUCLEOTIDE SEQUENCE [LARGE SCALE GENOMIC DNA]</scope>
    <source>
        <strain>DSM 19018 / LMG 30748 / EbN1</strain>
    </source>
</reference>
<evidence type="ECO:0000255" key="1">
    <source>
        <dbReference type="HAMAP-Rule" id="MF_00688"/>
    </source>
</evidence>
<feature type="chain" id="PRO_0000258044" description="Leucyl/phenylalanyl-tRNA--protein transferase">
    <location>
        <begin position="1"/>
        <end position="237"/>
    </location>
</feature>
<dbReference type="EC" id="2.3.2.6" evidence="1"/>
<dbReference type="EMBL" id="CR555306">
    <property type="protein sequence ID" value="CAI08907.1"/>
    <property type="molecule type" value="Genomic_DNA"/>
</dbReference>
<dbReference type="RefSeq" id="WP_011238590.1">
    <property type="nucleotide sequence ID" value="NC_006513.1"/>
</dbReference>
<dbReference type="SMR" id="Q5P1A7"/>
<dbReference type="STRING" id="76114.ebA4891"/>
<dbReference type="KEGG" id="eba:ebA4891"/>
<dbReference type="eggNOG" id="COG2360">
    <property type="taxonomic scope" value="Bacteria"/>
</dbReference>
<dbReference type="HOGENOM" id="CLU_075045_0_0_4"/>
<dbReference type="OrthoDB" id="9790282at2"/>
<dbReference type="Proteomes" id="UP000006552">
    <property type="component" value="Chromosome"/>
</dbReference>
<dbReference type="GO" id="GO:0005737">
    <property type="term" value="C:cytoplasm"/>
    <property type="evidence" value="ECO:0007669"/>
    <property type="project" value="UniProtKB-SubCell"/>
</dbReference>
<dbReference type="GO" id="GO:0008914">
    <property type="term" value="F:leucyl-tRNA--protein transferase activity"/>
    <property type="evidence" value="ECO:0007669"/>
    <property type="project" value="UniProtKB-UniRule"/>
</dbReference>
<dbReference type="GO" id="GO:0030163">
    <property type="term" value="P:protein catabolic process"/>
    <property type="evidence" value="ECO:0007669"/>
    <property type="project" value="UniProtKB-UniRule"/>
</dbReference>
<dbReference type="FunFam" id="3.30.70.3550:FF:000001">
    <property type="entry name" value="Leucyl/phenylalanyl-tRNA--protein transferase"/>
    <property type="match status" value="1"/>
</dbReference>
<dbReference type="FunFam" id="3.40.630.70:FF:000001">
    <property type="entry name" value="Leucyl/phenylalanyl-tRNA--protein transferase"/>
    <property type="match status" value="1"/>
</dbReference>
<dbReference type="Gene3D" id="3.40.630.70">
    <property type="entry name" value="Leucyl/phenylalanyl-tRNA-protein transferase, C-terminal domain"/>
    <property type="match status" value="1"/>
</dbReference>
<dbReference type="Gene3D" id="3.30.70.3550">
    <property type="entry name" value="Leucyl/phenylalanyl-tRNA-protein transferase, N-terminal domain"/>
    <property type="match status" value="1"/>
</dbReference>
<dbReference type="HAMAP" id="MF_00688">
    <property type="entry name" value="Leu_Phe_trans"/>
    <property type="match status" value="1"/>
</dbReference>
<dbReference type="InterPro" id="IPR016181">
    <property type="entry name" value="Acyl_CoA_acyltransferase"/>
</dbReference>
<dbReference type="InterPro" id="IPR004616">
    <property type="entry name" value="Leu/Phe-tRNA_Trfase"/>
</dbReference>
<dbReference type="InterPro" id="IPR042203">
    <property type="entry name" value="Leu/Phe-tRNA_Trfase_C"/>
</dbReference>
<dbReference type="InterPro" id="IPR042221">
    <property type="entry name" value="Leu/Phe-tRNA_Trfase_N"/>
</dbReference>
<dbReference type="NCBIfam" id="TIGR00667">
    <property type="entry name" value="aat"/>
    <property type="match status" value="1"/>
</dbReference>
<dbReference type="PANTHER" id="PTHR30098">
    <property type="entry name" value="LEUCYL/PHENYLALANYL-TRNA--PROTEIN TRANSFERASE"/>
    <property type="match status" value="1"/>
</dbReference>
<dbReference type="PANTHER" id="PTHR30098:SF2">
    <property type="entry name" value="LEUCYL_PHENYLALANYL-TRNA--PROTEIN TRANSFERASE"/>
    <property type="match status" value="1"/>
</dbReference>
<dbReference type="Pfam" id="PF03588">
    <property type="entry name" value="Leu_Phe_trans"/>
    <property type="match status" value="1"/>
</dbReference>
<dbReference type="SUPFAM" id="SSF55729">
    <property type="entry name" value="Acyl-CoA N-acyltransferases (Nat)"/>
    <property type="match status" value="1"/>
</dbReference>
<organism>
    <name type="scientific">Aromatoleum aromaticum (strain DSM 19018 / LMG 30748 / EbN1)</name>
    <name type="common">Azoarcus sp. (strain EbN1)</name>
    <dbReference type="NCBI Taxonomy" id="76114"/>
    <lineage>
        <taxon>Bacteria</taxon>
        <taxon>Pseudomonadati</taxon>
        <taxon>Pseudomonadota</taxon>
        <taxon>Betaproteobacteria</taxon>
        <taxon>Rhodocyclales</taxon>
        <taxon>Rhodocyclaceae</taxon>
        <taxon>Aromatoleum</taxon>
    </lineage>
</organism>
<keyword id="KW-0012">Acyltransferase</keyword>
<keyword id="KW-0963">Cytoplasm</keyword>
<keyword id="KW-1185">Reference proteome</keyword>
<keyword id="KW-0808">Transferase</keyword>
<name>LFTR_AROAE</name>